<gene>
    <name type="primary">GDF9</name>
</gene>
<reference key="1">
    <citation type="submission" date="2004-07" db="EMBL/GenBank/DDBJ databases">
        <title>Single nucleotide polymorphism analysis in goat growth differentiation factor 9.</title>
        <authorList>
            <person name="Wu Z.-H."/>
            <person name="Chu M.-X."/>
            <person name="Li X.-W."/>
        </authorList>
    </citation>
    <scope>NUCLEOTIDE SEQUENCE [GENOMIC DNA]</scope>
</reference>
<reference key="2">
    <citation type="journal article" date="2012" name="Mol. Cell. Endocrinol.">
        <title>The ratio of growth differentiation factor 9: bone morphogenetic protein 15 mRNA expression is tightly co-regulated and differs between species over a wide range of ovulation rates.</title>
        <authorList>
            <person name="Crawford J.L."/>
            <person name="McNatty K.P."/>
        </authorList>
    </citation>
    <scope>SPECIES-SPECIFIC OVULATION RATE DETERMINATION</scope>
</reference>
<evidence type="ECO:0000250" key="1"/>
<evidence type="ECO:0000255" key="2"/>
<evidence type="ECO:0000256" key="3">
    <source>
        <dbReference type="SAM" id="MobiDB-lite"/>
    </source>
</evidence>
<evidence type="ECO:0000305" key="4"/>
<name>GDF9_CAPHI</name>
<accession>Q66NC0</accession>
<protein>
    <recommendedName>
        <fullName>Growth/differentiation factor 9</fullName>
        <shortName>GDF-9</shortName>
    </recommendedName>
</protein>
<proteinExistence type="inferred from homology"/>
<dbReference type="EMBL" id="AY681349">
    <property type="protein sequence ID" value="AAU09020.1"/>
    <property type="molecule type" value="Genomic_DNA"/>
</dbReference>
<dbReference type="EMBL" id="AY682555">
    <property type="protein sequence ID" value="AAU09020.1"/>
    <property type="status" value="JOINED"/>
    <property type="molecule type" value="Genomic_DNA"/>
</dbReference>
<dbReference type="STRING" id="9925.ENSCHIP00000003958"/>
<dbReference type="GlyCosmos" id="Q66NC0">
    <property type="glycosylation" value="5 sites, No reported glycans"/>
</dbReference>
<dbReference type="Proteomes" id="UP000291000">
    <property type="component" value="Unassembled WGS sequence"/>
</dbReference>
<dbReference type="Proteomes" id="UP000694566">
    <property type="component" value="Unplaced"/>
</dbReference>
<dbReference type="GO" id="GO:0005615">
    <property type="term" value="C:extracellular space"/>
    <property type="evidence" value="ECO:0007669"/>
    <property type="project" value="UniProtKB-KW"/>
</dbReference>
<dbReference type="GO" id="GO:0005125">
    <property type="term" value="F:cytokine activity"/>
    <property type="evidence" value="ECO:0007669"/>
    <property type="project" value="UniProtKB-KW"/>
</dbReference>
<dbReference type="GO" id="GO:0008083">
    <property type="term" value="F:growth factor activity"/>
    <property type="evidence" value="ECO:0007669"/>
    <property type="project" value="UniProtKB-KW"/>
</dbReference>
<dbReference type="CDD" id="cd19403">
    <property type="entry name" value="TGF_beta_GDF9"/>
    <property type="match status" value="1"/>
</dbReference>
<dbReference type="FunFam" id="2.10.90.10:FF:000012">
    <property type="entry name" value="Growth/differentiation factor 9 (Predicted)"/>
    <property type="match status" value="1"/>
</dbReference>
<dbReference type="Gene3D" id="2.10.90.10">
    <property type="entry name" value="Cystine-knot cytokines"/>
    <property type="match status" value="1"/>
</dbReference>
<dbReference type="InterPro" id="IPR029034">
    <property type="entry name" value="Cystine-knot_cytokine"/>
</dbReference>
<dbReference type="InterPro" id="IPR015617">
    <property type="entry name" value="Growth_differentiation_fac-9_C"/>
</dbReference>
<dbReference type="InterPro" id="IPR001839">
    <property type="entry name" value="TGF-b_C"/>
</dbReference>
<dbReference type="InterPro" id="IPR015615">
    <property type="entry name" value="TGF-beta-rel"/>
</dbReference>
<dbReference type="InterPro" id="IPR017948">
    <property type="entry name" value="TGFb_CS"/>
</dbReference>
<dbReference type="PANTHER" id="PTHR11848:SF19">
    <property type="entry name" value="GROWTH_DIFFERENTIATION FACTOR 9"/>
    <property type="match status" value="1"/>
</dbReference>
<dbReference type="PANTHER" id="PTHR11848">
    <property type="entry name" value="TGF-BETA FAMILY"/>
    <property type="match status" value="1"/>
</dbReference>
<dbReference type="Pfam" id="PF00019">
    <property type="entry name" value="TGF_beta"/>
    <property type="match status" value="1"/>
</dbReference>
<dbReference type="SMART" id="SM00204">
    <property type="entry name" value="TGFB"/>
    <property type="match status" value="1"/>
</dbReference>
<dbReference type="SUPFAM" id="SSF57501">
    <property type="entry name" value="Cystine-knot cytokines"/>
    <property type="match status" value="1"/>
</dbReference>
<dbReference type="PROSITE" id="PS00250">
    <property type="entry name" value="TGF_BETA_1"/>
    <property type="match status" value="1"/>
</dbReference>
<dbReference type="PROSITE" id="PS51362">
    <property type="entry name" value="TGF_BETA_2"/>
    <property type="match status" value="1"/>
</dbReference>
<sequence>MALPNKFFLWFCCFAWLCFPISLDSLPSRGEAQIVARTALESEAETWSLLNHLGGRHRPGLLSPLLKVLYDGHGEPPRLQPDDRALRYMKRLYKAYATKEGTPKSNRRHLYNTVRLFTPCAQHKQAPGDLAAGTFPSVDLLFNLDRVTVVEHLFKSVLLYTFNNSISFPFPVKCICNLVIKEPEFSSKTLPRAPYSFTYNSQFEFRKKYKWMEIDVTAPLEPLVASHKRNIHMSVNFTCAKDQLQHPSARDSLFNMTLLVAPSLLLYLNDTSAQAFHRWHSLHPKRKPSQGPDQRRELSAYPVGEEAAEGVRSSRHRRDQESVSSELKKPLVPASANLSEYFKQFLFPQNECELHDFRLSFSQLKWDNWIVAPHKYNPRYCKGDCPRAVGHRYGSPVHTMVQNIIHEKLDSSVPRPSCVPAKYSPLSVLAIEPDGSIAYKEYEDMIATKCTCR</sequence>
<keyword id="KW-0165">Cleavage on pair of basic residues</keyword>
<keyword id="KW-0202">Cytokine</keyword>
<keyword id="KW-1015">Disulfide bond</keyword>
<keyword id="KW-0325">Glycoprotein</keyword>
<keyword id="KW-0339">Growth factor</keyword>
<keyword id="KW-0597">Phosphoprotein</keyword>
<keyword id="KW-1185">Reference proteome</keyword>
<keyword id="KW-0964">Secreted</keyword>
<keyword id="KW-0732">Signal</keyword>
<feature type="signal peptide" evidence="2">
    <location>
        <begin position="1"/>
        <end position="27"/>
    </location>
</feature>
<feature type="propeptide" id="PRO_0000033978" evidence="2">
    <location>
        <begin position="28"/>
        <end position="318"/>
    </location>
</feature>
<feature type="chain" id="PRO_0000033979" description="Growth/differentiation factor 9">
    <location>
        <begin position="319"/>
        <end position="453"/>
    </location>
</feature>
<feature type="region of interest" description="Disordered" evidence="3">
    <location>
        <begin position="282"/>
        <end position="328"/>
    </location>
</feature>
<feature type="compositionally biased region" description="Basic and acidic residues" evidence="3">
    <location>
        <begin position="318"/>
        <end position="328"/>
    </location>
</feature>
<feature type="glycosylation site" description="N-linked (GlcNAc...) asparagine" evidence="2">
    <location>
        <position position="163"/>
    </location>
</feature>
<feature type="glycosylation site" description="N-linked (GlcNAc...) asparagine" evidence="2">
    <location>
        <position position="236"/>
    </location>
</feature>
<feature type="glycosylation site" description="N-linked (GlcNAc...) asparagine" evidence="2">
    <location>
        <position position="255"/>
    </location>
</feature>
<feature type="glycosylation site" description="N-linked (GlcNAc...) asparagine" evidence="2">
    <location>
        <position position="269"/>
    </location>
</feature>
<feature type="glycosylation site" description="N-linked (GlcNAc...) asparagine" evidence="2">
    <location>
        <position position="337"/>
    </location>
</feature>
<feature type="disulfide bond" evidence="1">
    <location>
        <begin position="352"/>
        <end position="418"/>
    </location>
</feature>
<feature type="disulfide bond" evidence="1">
    <location>
        <begin position="381"/>
        <end position="450"/>
    </location>
</feature>
<feature type="disulfide bond" evidence="1">
    <location>
        <begin position="385"/>
        <end position="452"/>
    </location>
</feature>
<organism>
    <name type="scientific">Capra hircus</name>
    <name type="common">Goat</name>
    <dbReference type="NCBI Taxonomy" id="9925"/>
    <lineage>
        <taxon>Eukaryota</taxon>
        <taxon>Metazoa</taxon>
        <taxon>Chordata</taxon>
        <taxon>Craniata</taxon>
        <taxon>Vertebrata</taxon>
        <taxon>Euteleostomi</taxon>
        <taxon>Mammalia</taxon>
        <taxon>Eutheria</taxon>
        <taxon>Laurasiatheria</taxon>
        <taxon>Artiodactyla</taxon>
        <taxon>Ruminantia</taxon>
        <taxon>Pecora</taxon>
        <taxon>Bovidae</taxon>
        <taxon>Caprinae</taxon>
        <taxon>Capra</taxon>
    </lineage>
</organism>
<comment type="function">
    <text evidence="1">Required for ovarian folliculogenesis.</text>
</comment>
<comment type="subunit">
    <text evidence="1 4">Homodimer or heterodimer (Potential). But, in contrast to other members of this family, cannot be disulfide-linked (By similarity).</text>
</comment>
<comment type="subcellular location">
    <subcellularLocation>
        <location evidence="1">Secreted</location>
    </subcellularLocation>
</comment>
<comment type="PTM">
    <text evidence="1">Phosphorylated; phosphorylation is critical for GDF9 function.</text>
</comment>
<comment type="miscellaneous">
    <text>Ovarian physiology and fertility are controlled by endocrine and paracrine signals. These act in a species-dependent manner and determine the ovulation quota in different mammalian species. While humans, and mammals such as the cow or red deer, normally ovulate only one egg per cycle, other mammals such as mouse and pig can ovulate in excess of ten per cycle. The mechanisms that regulate the species-specific differences in the number of follicles that go onto ovulate during each reproductive cycle are poorly understood. According to PubMed:21970812, mRNA expression levels of GDF9 and BMP15 are tightly coregulated within each species and influence species-specific ovulation-rates.</text>
</comment>
<comment type="similarity">
    <text evidence="4">Belongs to the TGF-beta family.</text>
</comment>